<protein>
    <recommendedName>
        <fullName>Protein kinase C and casein kinase substrate in neurons protein 1</fullName>
    </recommendedName>
</protein>
<organism>
    <name type="scientific">Bos taurus</name>
    <name type="common">Bovine</name>
    <dbReference type="NCBI Taxonomy" id="9913"/>
    <lineage>
        <taxon>Eukaryota</taxon>
        <taxon>Metazoa</taxon>
        <taxon>Chordata</taxon>
        <taxon>Craniata</taxon>
        <taxon>Vertebrata</taxon>
        <taxon>Euteleostomi</taxon>
        <taxon>Mammalia</taxon>
        <taxon>Eutheria</taxon>
        <taxon>Laurasiatheria</taxon>
        <taxon>Artiodactyla</taxon>
        <taxon>Ruminantia</taxon>
        <taxon>Pecora</taxon>
        <taxon>Bovidae</taxon>
        <taxon>Bovinae</taxon>
        <taxon>Bos</taxon>
    </lineage>
</organism>
<gene>
    <name type="primary">PACSIN1</name>
</gene>
<name>PACN1_BOVIN</name>
<comment type="function">
    <text evidence="1">Binds to membranes via its F-BAR domain and mediates membrane tubulation. Plays a role in the reorganization of the microtubule cytoskeleton via its interaction with MAPT; this decreases microtubule stability and inhibits MAPT-induced microtubule polymerization. Plays a role in cellular transport processes by recruiting DNM1, DNM2 and DNM3 to membranes. Plays a role in the reorganization of the actin cytoskeleton and in neuron morphogenesis via its interaction with COBL and WASL, and by recruiting COBL to the cell cortex. Plays a role in the regulation of neurite formation, neurite branching and the regulation of neurite length. Required for normal synaptic vesicle endocytosis; this process retrieves previously released neurotransmitters to accommodate multiple cycles of neurotransmission. Required for normal excitatory and inhibitory synaptic transmission (By similarity).</text>
</comment>
<comment type="subunit">
    <text evidence="1">Homodimer. May form heterooligomers with other PACSINs. Interacts with MAPT (By similarity). Interacts (via SH3 domain) with SYNJ1 and WASL. Interacts (via SH3 domain) with DNM1; the interaction is reduced by DNM1 phosphorylation. Interacts with DNM2 and DNM3. Interacts with both COBL and DBNL. Identified in a complex composed of COBL, PACSIN1 and WASL. Interacts with EHD1 and EHD3. Interacts with TRPV4 (By similarity).</text>
</comment>
<comment type="subcellular location">
    <subcellularLocation>
        <location evidence="1">Cytoplasm</location>
    </subcellularLocation>
    <subcellularLocation>
        <location evidence="1">Cell projection</location>
    </subcellularLocation>
    <subcellularLocation>
        <location evidence="1">Synapse</location>
        <location evidence="1">Synaptosome</location>
    </subcellularLocation>
    <subcellularLocation>
        <location evidence="1">Cell projection</location>
        <location evidence="1">Ruffle membrane</location>
    </subcellularLocation>
    <subcellularLocation>
        <location evidence="1">Membrane</location>
        <topology evidence="1">Peripheral membrane protein</topology>
    </subcellularLocation>
    <subcellularLocation>
        <location evidence="1">Cytoplasmic vesicle membrane</location>
        <topology evidence="1">Peripheral membrane protein</topology>
    </subcellularLocation>
    <subcellularLocation>
        <location evidence="1">Synapse</location>
    </subcellularLocation>
    <subcellularLocation>
        <location evidence="1">Cytoplasm</location>
        <location evidence="1">Cytosol</location>
    </subcellularLocation>
    <subcellularLocation>
        <location evidence="1">Cell membrane</location>
        <topology evidence="1">Peripheral membrane protein</topology>
        <orientation evidence="1">Cytoplasmic side</orientation>
    </subcellularLocation>
    <text evidence="1">Colocalizes with MAPT in axons. In primary neuronal cultures, present at a high level in presynaptic nerve terminals and in the cell body. Colocalizes with DNM1 at vesicular structures in the cell body and neurites. Associates with membranes via its F-BAR domain (By similarity).</text>
</comment>
<comment type="domain">
    <text evidence="1">The F-BAR domain forms a coiled coil and mediates membrane-binding and membrane tubulation. In the autoinhibited conformation, interaction with the SH3 domain inhibits membrane tubulation mediated by the F-BAR domain. DNM1 binding abolishes autoinhibition (By similarity).</text>
</comment>
<comment type="PTM">
    <text evidence="7">Phosphorylated by casein kinase 2 (CK2) and protein kinase C (PKC).</text>
</comment>
<comment type="similarity">
    <text evidence="7">Belongs to the PACSIN family.</text>
</comment>
<reference key="1">
    <citation type="submission" date="2007-09" db="EMBL/GenBank/DDBJ databases">
        <authorList>
            <consortium name="NIH - Mammalian Gene Collection (MGC) project"/>
        </authorList>
    </citation>
    <scope>NUCLEOTIDE SEQUENCE [LARGE SCALE MRNA]</scope>
    <source>
        <strain>Hereford</strain>
        <tissue>Fetal brain</tissue>
        <tissue>Fetal skin</tissue>
    </source>
</reference>
<sequence length="444" mass="50658">MSGSYDEASLAPEETTDSFWEVGNYKRTVKRIDDGHRLCNDLMSCVQERAKIEKAYAQQLTDWAKRWRQLLEKGPQYGSLERAWGAIMTEADKVSELHQEMKNSLLNEDLEKVKNWQKDAYHKQIMGGFKETKEAEDGFRKAQKPWAKKMKELEAAKKAYHLACKEEKLAVTREMNSKTEQSVTPEQQKKLQDKVDKCKQDVQKTQEKYEKVLDDVGKTTPQYMEGMEQVFEQCQQFEEKRLVFLKEVLLDIKRHLNLAESSSYVQVYRELEQAIRGADAQDDLRWFRSTSGPGMPMNWPQFEEWNPDLPHTAAKKEKQPKKAEGAALTNAAGVVESTSQAGDRGSVSSYDRGQTYATEWSDDESGNPFGGSEANGGSNPFDEDAKGVRVRALYDYDGQEQDELSFKAGDELTKLGEEDEQGWCRGRLDSGQLGLYPANYVEVV</sequence>
<evidence type="ECO:0000250" key="1"/>
<evidence type="ECO:0000250" key="2">
    <source>
        <dbReference type="UniProtKB" id="Q61644"/>
    </source>
</evidence>
<evidence type="ECO:0000250" key="3">
    <source>
        <dbReference type="UniProtKB" id="Q9Z0W5"/>
    </source>
</evidence>
<evidence type="ECO:0000255" key="4">
    <source>
        <dbReference type="PROSITE-ProRule" id="PRU00192"/>
    </source>
</evidence>
<evidence type="ECO:0000255" key="5">
    <source>
        <dbReference type="PROSITE-ProRule" id="PRU01077"/>
    </source>
</evidence>
<evidence type="ECO:0000256" key="6">
    <source>
        <dbReference type="SAM" id="MobiDB-lite"/>
    </source>
</evidence>
<evidence type="ECO:0000305" key="7"/>
<accession>A7MBI0</accession>
<accession>A7Z043</accession>
<proteinExistence type="evidence at transcript level"/>
<dbReference type="EMBL" id="BC151572">
    <property type="protein sequence ID" value="AAI51573.1"/>
    <property type="molecule type" value="mRNA"/>
</dbReference>
<dbReference type="EMBL" id="BC153241">
    <property type="protein sequence ID" value="AAI53242.1"/>
    <property type="molecule type" value="mRNA"/>
</dbReference>
<dbReference type="RefSeq" id="NP_001094571.1">
    <property type="nucleotide sequence ID" value="NM_001101101.1"/>
</dbReference>
<dbReference type="SMR" id="A7MBI0"/>
<dbReference type="FunCoup" id="A7MBI0">
    <property type="interactions" value="1354"/>
</dbReference>
<dbReference type="STRING" id="9913.ENSBTAP00000068031"/>
<dbReference type="PaxDb" id="9913-ENSBTAP00000021459"/>
<dbReference type="GeneID" id="520488"/>
<dbReference type="KEGG" id="bta:520488"/>
<dbReference type="CTD" id="29993"/>
<dbReference type="VEuPathDB" id="HostDB:ENSBTAG00000016124"/>
<dbReference type="eggNOG" id="KOG2856">
    <property type="taxonomic scope" value="Eukaryota"/>
</dbReference>
<dbReference type="HOGENOM" id="CLU_030752_0_0_1"/>
<dbReference type="InParanoid" id="A7MBI0"/>
<dbReference type="OrthoDB" id="10255128at2759"/>
<dbReference type="TreeFam" id="TF313677"/>
<dbReference type="Reactome" id="R-BTA-8856828">
    <property type="pathway name" value="Clathrin-mediated endocytosis"/>
</dbReference>
<dbReference type="Proteomes" id="UP000009136">
    <property type="component" value="Chromosome 23"/>
</dbReference>
<dbReference type="Bgee" id="ENSBTAG00000016124">
    <property type="expression patterns" value="Expressed in retina and 86 other cell types or tissues"/>
</dbReference>
<dbReference type="GO" id="GO:0043679">
    <property type="term" value="C:axon terminus"/>
    <property type="evidence" value="ECO:0000250"/>
    <property type="project" value="UniProtKB"/>
</dbReference>
<dbReference type="GO" id="GO:0005737">
    <property type="term" value="C:cytoplasm"/>
    <property type="evidence" value="ECO:0000250"/>
    <property type="project" value="UniProtKB"/>
</dbReference>
<dbReference type="GO" id="GO:0030659">
    <property type="term" value="C:cytoplasmic vesicle membrane"/>
    <property type="evidence" value="ECO:0007669"/>
    <property type="project" value="UniProtKB-SubCell"/>
</dbReference>
<dbReference type="GO" id="GO:0005829">
    <property type="term" value="C:cytosol"/>
    <property type="evidence" value="ECO:0007669"/>
    <property type="project" value="UniProtKB-SubCell"/>
</dbReference>
<dbReference type="GO" id="GO:0005768">
    <property type="term" value="C:endosome"/>
    <property type="evidence" value="ECO:0000318"/>
    <property type="project" value="GO_Central"/>
</dbReference>
<dbReference type="GO" id="GO:0032587">
    <property type="term" value="C:ruffle membrane"/>
    <property type="evidence" value="ECO:0000250"/>
    <property type="project" value="UniProtKB"/>
</dbReference>
<dbReference type="GO" id="GO:0005543">
    <property type="term" value="F:phospholipid binding"/>
    <property type="evidence" value="ECO:0000250"/>
    <property type="project" value="UniProtKB"/>
</dbReference>
<dbReference type="GO" id="GO:0007015">
    <property type="term" value="P:actin filament organization"/>
    <property type="evidence" value="ECO:0007669"/>
    <property type="project" value="InterPro"/>
</dbReference>
<dbReference type="GO" id="GO:0007010">
    <property type="term" value="P:cytoskeleton organization"/>
    <property type="evidence" value="ECO:0000318"/>
    <property type="project" value="GO_Central"/>
</dbReference>
<dbReference type="GO" id="GO:0048812">
    <property type="term" value="P:neuron projection morphogenesis"/>
    <property type="evidence" value="ECO:0000250"/>
    <property type="project" value="UniProtKB"/>
</dbReference>
<dbReference type="GO" id="GO:0097320">
    <property type="term" value="P:plasma membrane tubulation"/>
    <property type="evidence" value="ECO:0000250"/>
    <property type="project" value="UniProtKB"/>
</dbReference>
<dbReference type="GO" id="GO:1900006">
    <property type="term" value="P:positive regulation of dendrite development"/>
    <property type="evidence" value="ECO:0000318"/>
    <property type="project" value="GO_Central"/>
</dbReference>
<dbReference type="GO" id="GO:0072657">
    <property type="term" value="P:protein localization to membrane"/>
    <property type="evidence" value="ECO:0000250"/>
    <property type="project" value="UniProtKB"/>
</dbReference>
<dbReference type="GO" id="GO:0030100">
    <property type="term" value="P:regulation of endocytosis"/>
    <property type="evidence" value="ECO:0000318"/>
    <property type="project" value="GO_Central"/>
</dbReference>
<dbReference type="GO" id="GO:0048488">
    <property type="term" value="P:synaptic vesicle endocytosis"/>
    <property type="evidence" value="ECO:0000250"/>
    <property type="project" value="UniProtKB"/>
</dbReference>
<dbReference type="CDD" id="cd07680">
    <property type="entry name" value="F-BAR_PACSIN1"/>
    <property type="match status" value="1"/>
</dbReference>
<dbReference type="CDD" id="cd11998">
    <property type="entry name" value="SH3_PACSIN1-2"/>
    <property type="match status" value="1"/>
</dbReference>
<dbReference type="FunFam" id="2.30.30.40:FF:000014">
    <property type="entry name" value="Kinase C and casein kinase substrate in neurons protein"/>
    <property type="match status" value="1"/>
</dbReference>
<dbReference type="FunFam" id="1.20.1270.60:FF:000205">
    <property type="entry name" value="Protein kinase C and casein kinase substrate in neurons protein 1"/>
    <property type="match status" value="1"/>
</dbReference>
<dbReference type="Gene3D" id="1.20.1270.60">
    <property type="entry name" value="Arfaptin homology (AH) domain/BAR domain"/>
    <property type="match status" value="1"/>
</dbReference>
<dbReference type="Gene3D" id="2.30.30.40">
    <property type="entry name" value="SH3 Domains"/>
    <property type="match status" value="1"/>
</dbReference>
<dbReference type="InterPro" id="IPR027267">
    <property type="entry name" value="AH/BAR_dom_sf"/>
</dbReference>
<dbReference type="InterPro" id="IPR031160">
    <property type="entry name" value="F_BAR"/>
</dbReference>
<dbReference type="InterPro" id="IPR001060">
    <property type="entry name" value="FCH_dom"/>
</dbReference>
<dbReference type="InterPro" id="IPR035743">
    <property type="entry name" value="PACSIN1/PACSIN2_SH3"/>
</dbReference>
<dbReference type="InterPro" id="IPR037454">
    <property type="entry name" value="PACSIN1_F-BAR"/>
</dbReference>
<dbReference type="InterPro" id="IPR036028">
    <property type="entry name" value="SH3-like_dom_sf"/>
</dbReference>
<dbReference type="InterPro" id="IPR001452">
    <property type="entry name" value="SH3_domain"/>
</dbReference>
<dbReference type="PANTHER" id="PTHR23065">
    <property type="entry name" value="PROLINE-SERINE-THREONINE PHOSPHATASE INTERACTING PROTEIN 1"/>
    <property type="match status" value="1"/>
</dbReference>
<dbReference type="PANTHER" id="PTHR23065:SF16">
    <property type="entry name" value="PROTEIN KINASE C AND CASEIN KINASE SUBSTRATE IN NEURONS PROTEIN 1"/>
    <property type="match status" value="1"/>
</dbReference>
<dbReference type="Pfam" id="PF00611">
    <property type="entry name" value="FCH"/>
    <property type="match status" value="1"/>
</dbReference>
<dbReference type="Pfam" id="PF14604">
    <property type="entry name" value="SH3_9"/>
    <property type="match status" value="1"/>
</dbReference>
<dbReference type="PRINTS" id="PR00452">
    <property type="entry name" value="SH3DOMAIN"/>
</dbReference>
<dbReference type="SMART" id="SM00055">
    <property type="entry name" value="FCH"/>
    <property type="match status" value="1"/>
</dbReference>
<dbReference type="SMART" id="SM00326">
    <property type="entry name" value="SH3"/>
    <property type="match status" value="1"/>
</dbReference>
<dbReference type="SUPFAM" id="SSF103657">
    <property type="entry name" value="BAR/IMD domain-like"/>
    <property type="match status" value="1"/>
</dbReference>
<dbReference type="SUPFAM" id="SSF50044">
    <property type="entry name" value="SH3-domain"/>
    <property type="match status" value="1"/>
</dbReference>
<dbReference type="PROSITE" id="PS51741">
    <property type="entry name" value="F_BAR"/>
    <property type="match status" value="1"/>
</dbReference>
<dbReference type="PROSITE" id="PS50002">
    <property type="entry name" value="SH3"/>
    <property type="match status" value="1"/>
</dbReference>
<feature type="chain" id="PRO_0000351649" description="Protein kinase C and casein kinase substrate in neurons protein 1">
    <location>
        <begin position="1"/>
        <end position="444"/>
    </location>
</feature>
<feature type="domain" description="F-BAR" evidence="5">
    <location>
        <begin position="13"/>
        <end position="283"/>
    </location>
</feature>
<feature type="domain" description="SH3" evidence="4">
    <location>
        <begin position="385"/>
        <end position="444"/>
    </location>
</feature>
<feature type="region of interest" description="Disordered" evidence="6">
    <location>
        <begin position="313"/>
        <end position="384"/>
    </location>
</feature>
<feature type="coiled-coil region" evidence="1">
    <location>
        <begin position="26"/>
        <end position="275"/>
    </location>
</feature>
<feature type="compositionally biased region" description="Basic and acidic residues" evidence="6">
    <location>
        <begin position="314"/>
        <end position="324"/>
    </location>
</feature>
<feature type="compositionally biased region" description="Polar residues" evidence="6">
    <location>
        <begin position="336"/>
        <end position="358"/>
    </location>
</feature>
<feature type="modified residue" description="Phosphoserine" evidence="3">
    <location>
        <position position="2"/>
    </location>
</feature>
<feature type="modified residue" description="Phosphoserine" evidence="3">
    <location>
        <position position="79"/>
    </location>
</feature>
<feature type="modified residue" description="Phosphothreonine" evidence="3">
    <location>
        <position position="184"/>
    </location>
</feature>
<feature type="modified residue" description="Phosphoserine" evidence="2">
    <location>
        <position position="346"/>
    </location>
</feature>
<feature type="modified residue" description="Phosphoserine" evidence="2">
    <location>
        <position position="348"/>
    </location>
</feature>
<feature type="modified residue" description="Phosphoserine" evidence="3">
    <location>
        <position position="349"/>
    </location>
</feature>
<feature type="modified residue" description="Phosphoserine" evidence="2">
    <location>
        <position position="361"/>
    </location>
</feature>
<feature type="modified residue" description="Phosphoserine" evidence="3">
    <location>
        <position position="365"/>
    </location>
</feature>
<feature type="modified residue" description="Phosphotyrosine" evidence="2">
    <location>
        <position position="394"/>
    </location>
</feature>
<feature type="modified residue" description="Phosphoserine" evidence="2">
    <location>
        <position position="405"/>
    </location>
</feature>
<feature type="modified residue" description="Phosphoserine" evidence="2">
    <location>
        <position position="430"/>
    </location>
</feature>
<feature type="sequence conflict" description="In Ref. 1; AAI53242." evidence="7" ref="1">
    <original>E</original>
    <variation>Q</variation>
    <location>
        <position position="108"/>
    </location>
</feature>
<keyword id="KW-1003">Cell membrane</keyword>
<keyword id="KW-0966">Cell projection</keyword>
<keyword id="KW-0175">Coiled coil</keyword>
<keyword id="KW-0963">Cytoplasm</keyword>
<keyword id="KW-0968">Cytoplasmic vesicle</keyword>
<keyword id="KW-0254">Endocytosis</keyword>
<keyword id="KW-0446">Lipid-binding</keyword>
<keyword id="KW-0472">Membrane</keyword>
<keyword id="KW-0597">Phosphoprotein</keyword>
<keyword id="KW-1185">Reference proteome</keyword>
<keyword id="KW-0728">SH3 domain</keyword>
<keyword id="KW-0770">Synapse</keyword>
<keyword id="KW-0771">Synaptosome</keyword>